<proteinExistence type="inferred from homology"/>
<comment type="function">
    <text evidence="1">One of the early assembly proteins it binds 23S rRNA. One of the proteins that surrounds the polypeptide exit tunnel on the outside of the ribosome. Forms the main docking site for trigger factor binding to the ribosome.</text>
</comment>
<comment type="subunit">
    <text evidence="1">Part of the 50S ribosomal subunit. Contacts protein L29, and trigger factor when it is bound to the ribosome.</text>
</comment>
<comment type="similarity">
    <text evidence="1">Belongs to the universal ribosomal protein uL23 family.</text>
</comment>
<reference key="1">
    <citation type="journal article" date="2009" name="J. Bacteriol.">
        <title>Complete and draft genome sequences of six members of the Aquificales.</title>
        <authorList>
            <person name="Reysenbach A.-L."/>
            <person name="Hamamura N."/>
            <person name="Podar M."/>
            <person name="Griffiths E."/>
            <person name="Ferreira S."/>
            <person name="Hochstein R."/>
            <person name="Heidelberg J."/>
            <person name="Johnson J."/>
            <person name="Mead D."/>
            <person name="Pohorille A."/>
            <person name="Sarmiento M."/>
            <person name="Schweighofer K."/>
            <person name="Seshadri R."/>
            <person name="Voytek M.A."/>
        </authorList>
    </citation>
    <scope>NUCLEOTIDE SEQUENCE [LARGE SCALE GENOMIC DNA]</scope>
    <source>
        <strain>YO3AOP1</strain>
    </source>
</reference>
<feature type="chain" id="PRO_1000144613" description="Large ribosomal subunit protein uL23">
    <location>
        <begin position="1"/>
        <end position="97"/>
    </location>
</feature>
<gene>
    <name evidence="1" type="primary">rplW</name>
    <name type="ordered locus">SYO3AOP1_0289</name>
</gene>
<sequence>MKTIYDIIIRPVLTEKAVKDNEKKNTLTFEVDMNASKTEIKEAVEKIFNVKVKEVRTLIVKPKPKRFGFRSSGYKKAWKKAIVKVESEKPINIAELV</sequence>
<name>RL23_SULSY</name>
<organism>
    <name type="scientific">Sulfurihydrogenibium sp. (strain YO3AOP1)</name>
    <dbReference type="NCBI Taxonomy" id="436114"/>
    <lineage>
        <taxon>Bacteria</taxon>
        <taxon>Pseudomonadati</taxon>
        <taxon>Aquificota</taxon>
        <taxon>Aquificia</taxon>
        <taxon>Aquificales</taxon>
        <taxon>Hydrogenothermaceae</taxon>
        <taxon>Sulfurihydrogenibium</taxon>
    </lineage>
</organism>
<keyword id="KW-0687">Ribonucleoprotein</keyword>
<keyword id="KW-0689">Ribosomal protein</keyword>
<keyword id="KW-0694">RNA-binding</keyword>
<keyword id="KW-0699">rRNA-binding</keyword>
<dbReference type="EMBL" id="CP001080">
    <property type="protein sequence ID" value="ACD65934.1"/>
    <property type="molecule type" value="Genomic_DNA"/>
</dbReference>
<dbReference type="RefSeq" id="WP_012459023.1">
    <property type="nucleotide sequence ID" value="NC_010730.1"/>
</dbReference>
<dbReference type="SMR" id="B2V7L1"/>
<dbReference type="STRING" id="436114.SYO3AOP1_0289"/>
<dbReference type="KEGG" id="sul:SYO3AOP1_0289"/>
<dbReference type="eggNOG" id="COG0089">
    <property type="taxonomic scope" value="Bacteria"/>
</dbReference>
<dbReference type="HOGENOM" id="CLU_037562_3_1_0"/>
<dbReference type="GO" id="GO:1990904">
    <property type="term" value="C:ribonucleoprotein complex"/>
    <property type="evidence" value="ECO:0007669"/>
    <property type="project" value="UniProtKB-KW"/>
</dbReference>
<dbReference type="GO" id="GO:0005840">
    <property type="term" value="C:ribosome"/>
    <property type="evidence" value="ECO:0007669"/>
    <property type="project" value="UniProtKB-KW"/>
</dbReference>
<dbReference type="GO" id="GO:0019843">
    <property type="term" value="F:rRNA binding"/>
    <property type="evidence" value="ECO:0007669"/>
    <property type="project" value="UniProtKB-UniRule"/>
</dbReference>
<dbReference type="GO" id="GO:0003735">
    <property type="term" value="F:structural constituent of ribosome"/>
    <property type="evidence" value="ECO:0007669"/>
    <property type="project" value="InterPro"/>
</dbReference>
<dbReference type="GO" id="GO:0006412">
    <property type="term" value="P:translation"/>
    <property type="evidence" value="ECO:0007669"/>
    <property type="project" value="UniProtKB-UniRule"/>
</dbReference>
<dbReference type="FunFam" id="3.30.70.330:FF:000001">
    <property type="entry name" value="50S ribosomal protein L23"/>
    <property type="match status" value="1"/>
</dbReference>
<dbReference type="Gene3D" id="3.30.70.330">
    <property type="match status" value="1"/>
</dbReference>
<dbReference type="HAMAP" id="MF_01369_B">
    <property type="entry name" value="Ribosomal_uL23_B"/>
    <property type="match status" value="1"/>
</dbReference>
<dbReference type="InterPro" id="IPR012677">
    <property type="entry name" value="Nucleotide-bd_a/b_plait_sf"/>
</dbReference>
<dbReference type="InterPro" id="IPR013025">
    <property type="entry name" value="Ribosomal_uL23-like"/>
</dbReference>
<dbReference type="InterPro" id="IPR012678">
    <property type="entry name" value="Ribosomal_uL23/eL15/eS24_sf"/>
</dbReference>
<dbReference type="NCBIfam" id="NF004363">
    <property type="entry name" value="PRK05738.2-4"/>
    <property type="match status" value="1"/>
</dbReference>
<dbReference type="PANTHER" id="PTHR11620">
    <property type="entry name" value="60S RIBOSOMAL PROTEIN L23A"/>
    <property type="match status" value="1"/>
</dbReference>
<dbReference type="Pfam" id="PF00276">
    <property type="entry name" value="Ribosomal_L23"/>
    <property type="match status" value="1"/>
</dbReference>
<dbReference type="SUPFAM" id="SSF54189">
    <property type="entry name" value="Ribosomal proteins S24e, L23 and L15e"/>
    <property type="match status" value="1"/>
</dbReference>
<accession>B2V7L1</accession>
<protein>
    <recommendedName>
        <fullName evidence="1">Large ribosomal subunit protein uL23</fullName>
    </recommendedName>
    <alternativeName>
        <fullName evidence="2">50S ribosomal protein L23</fullName>
    </alternativeName>
</protein>
<evidence type="ECO:0000255" key="1">
    <source>
        <dbReference type="HAMAP-Rule" id="MF_01369"/>
    </source>
</evidence>
<evidence type="ECO:0000305" key="2"/>